<gene>
    <name evidence="1" type="primary">rpoC1</name>
</gene>
<geneLocation type="chloroplast"/>
<sequence length="682" mass="78913">MIDQYKHQQLRIGSVSPQQISAWATKILPNGEIVGEVTKPYTFHYKTNKPEKDGLFCERIFGPIKSGICTCGNYRVIGDKKDEPKFCEQCGVEFVDSRIRRYQMGYIKLACPVTHVWYLKRLPSYIANLLDKPLKELEGLVYCDFSFARPVVKKPTFLRLRGLFEYEIQSWKYSIPLFFATHGFDTFRNREISSGAGAIREQLVDLDLRIVIDSSLVEWKELGEERSTHNENEWEDRKVGRRKNFLVRRMELAKHFIRTNIEPEWMVLCLLPVLPPELRPIIQIDGGKLMSSDINELYRRVIYRNNTLIDLLTTSRSTPGELVMCQEKLVQEAVDTLLDNGIRGQPMKDGHNKVYKSFSDIIEGKEGRFRETLLGKRVDYSGRSVIVVGPSLSLHRCGLPREIAIELFQTFLIRSLIRKHFASNIGVAKSKIREKEPIVWEILQEVMRGHPILLNRAPTLHRLGIQAFQPILVEGRAICLHPLVCKGFNADFDGDQMAIHVPLSLEAQAEARLLMFSHTNLLSPAIGDPIAVPTQDMLIGLYILTSGNRRGICANRYNRSNWKNSKNEKIRDKKYMKKKEPFFSNSYDAIGAFRQKKINFDSPFWLRWRLDKCIMSSREAPIEVHYESLGTYHDIYEHYLVIRSIKKQICCIYIRTTIGHISFYREIEEAIQGFCRGYSYGI</sequence>
<protein>
    <recommendedName>
        <fullName evidence="1">DNA-directed RNA polymerase subunit beta'</fullName>
        <ecNumber evidence="1">2.7.7.6</ecNumber>
    </recommendedName>
    <alternativeName>
        <fullName evidence="1">PEP</fullName>
    </alternativeName>
    <alternativeName>
        <fullName evidence="1">Plastid-encoded RNA polymerase subunit beta'</fullName>
        <shortName evidence="1">RNA polymerase subunit beta'</shortName>
    </alternativeName>
</protein>
<name>RPOC1_LOTJA</name>
<comment type="function">
    <text evidence="1">DNA-dependent RNA polymerase catalyzes the transcription of DNA into RNA using the four ribonucleoside triphosphates as substrates.</text>
</comment>
<comment type="catalytic activity">
    <reaction evidence="1">
        <text>RNA(n) + a ribonucleoside 5'-triphosphate = RNA(n+1) + diphosphate</text>
        <dbReference type="Rhea" id="RHEA:21248"/>
        <dbReference type="Rhea" id="RHEA-COMP:14527"/>
        <dbReference type="Rhea" id="RHEA-COMP:17342"/>
        <dbReference type="ChEBI" id="CHEBI:33019"/>
        <dbReference type="ChEBI" id="CHEBI:61557"/>
        <dbReference type="ChEBI" id="CHEBI:140395"/>
        <dbReference type="EC" id="2.7.7.6"/>
    </reaction>
</comment>
<comment type="cofactor">
    <cofactor evidence="1">
        <name>Mg(2+)</name>
        <dbReference type="ChEBI" id="CHEBI:18420"/>
    </cofactor>
    <text evidence="1">Binds 1 Mg(2+) ion per subunit.</text>
</comment>
<comment type="cofactor">
    <cofactor evidence="1">
        <name>Zn(2+)</name>
        <dbReference type="ChEBI" id="CHEBI:29105"/>
    </cofactor>
    <text evidence="1">Binds 1 Zn(2+) ion per subunit.</text>
</comment>
<comment type="subunit">
    <text evidence="1">In plastids the minimal PEP RNA polymerase catalytic core is composed of four subunits: alpha, beta, beta', and beta''. When a (nuclear-encoded) sigma factor is associated with the core the holoenzyme is formed, which can initiate transcription.</text>
</comment>
<comment type="subcellular location">
    <subcellularLocation>
        <location evidence="1">Plastid</location>
        <location evidence="1">Chloroplast</location>
    </subcellularLocation>
</comment>
<comment type="similarity">
    <text evidence="1">Belongs to the RNA polymerase beta' chain family. RpoC1 subfamily.</text>
</comment>
<reference key="1">
    <citation type="journal article" date="2000" name="DNA Res.">
        <title>Complete structure of the chloroplast genome of a legume, Lotus japonicus.</title>
        <authorList>
            <person name="Kato T."/>
            <person name="Kaneko T."/>
            <person name="Sato S."/>
            <person name="Nakamura Y."/>
            <person name="Tabata S."/>
        </authorList>
    </citation>
    <scope>NUCLEOTIDE SEQUENCE [LARGE SCALE GENOMIC DNA]</scope>
    <source>
        <strain>cv. Miyakojima MG-20</strain>
    </source>
</reference>
<keyword id="KW-0150">Chloroplast</keyword>
<keyword id="KW-0240">DNA-directed RNA polymerase</keyword>
<keyword id="KW-0460">Magnesium</keyword>
<keyword id="KW-0479">Metal-binding</keyword>
<keyword id="KW-0548">Nucleotidyltransferase</keyword>
<keyword id="KW-0934">Plastid</keyword>
<keyword id="KW-0804">Transcription</keyword>
<keyword id="KW-0808">Transferase</keyword>
<keyword id="KW-0862">Zinc</keyword>
<proteinExistence type="inferred from homology"/>
<feature type="chain" id="PRO_0000067878" description="DNA-directed RNA polymerase subunit beta'">
    <location>
        <begin position="1"/>
        <end position="682"/>
    </location>
</feature>
<feature type="binding site" evidence="1">
    <location>
        <position position="69"/>
    </location>
    <ligand>
        <name>Zn(2+)</name>
        <dbReference type="ChEBI" id="CHEBI:29105"/>
    </ligand>
</feature>
<feature type="binding site" evidence="1">
    <location>
        <position position="71"/>
    </location>
    <ligand>
        <name>Zn(2+)</name>
        <dbReference type="ChEBI" id="CHEBI:29105"/>
    </ligand>
</feature>
<feature type="binding site" evidence="1">
    <location>
        <position position="87"/>
    </location>
    <ligand>
        <name>Zn(2+)</name>
        <dbReference type="ChEBI" id="CHEBI:29105"/>
    </ligand>
</feature>
<feature type="binding site" evidence="1">
    <location>
        <position position="90"/>
    </location>
    <ligand>
        <name>Zn(2+)</name>
        <dbReference type="ChEBI" id="CHEBI:29105"/>
    </ligand>
</feature>
<feature type="binding site" evidence="1">
    <location>
        <position position="491"/>
    </location>
    <ligand>
        <name>Mg(2+)</name>
        <dbReference type="ChEBI" id="CHEBI:18420"/>
    </ligand>
</feature>
<feature type="binding site" evidence="1">
    <location>
        <position position="493"/>
    </location>
    <ligand>
        <name>Mg(2+)</name>
        <dbReference type="ChEBI" id="CHEBI:18420"/>
    </ligand>
</feature>
<feature type="binding site" evidence="1">
    <location>
        <position position="495"/>
    </location>
    <ligand>
        <name>Mg(2+)</name>
        <dbReference type="ChEBI" id="CHEBI:18420"/>
    </ligand>
</feature>
<evidence type="ECO:0000255" key="1">
    <source>
        <dbReference type="HAMAP-Rule" id="MF_01323"/>
    </source>
</evidence>
<dbReference type="EC" id="2.7.7.6" evidence="1"/>
<dbReference type="EMBL" id="AP002983">
    <property type="protein sequence ID" value="BAB33195.1"/>
    <property type="molecule type" value="Genomic_DNA"/>
</dbReference>
<dbReference type="RefSeq" id="NP_084797.1">
    <property type="nucleotide sequence ID" value="NC_002694.1"/>
</dbReference>
<dbReference type="SMR" id="Q9BBS8"/>
<dbReference type="GeneID" id="802956"/>
<dbReference type="GO" id="GO:0009507">
    <property type="term" value="C:chloroplast"/>
    <property type="evidence" value="ECO:0007669"/>
    <property type="project" value="UniProtKB-SubCell"/>
</dbReference>
<dbReference type="GO" id="GO:0000428">
    <property type="term" value="C:DNA-directed RNA polymerase complex"/>
    <property type="evidence" value="ECO:0007669"/>
    <property type="project" value="UniProtKB-KW"/>
</dbReference>
<dbReference type="GO" id="GO:0005739">
    <property type="term" value="C:mitochondrion"/>
    <property type="evidence" value="ECO:0007669"/>
    <property type="project" value="GOC"/>
</dbReference>
<dbReference type="GO" id="GO:0003677">
    <property type="term" value="F:DNA binding"/>
    <property type="evidence" value="ECO:0007669"/>
    <property type="project" value="UniProtKB-UniRule"/>
</dbReference>
<dbReference type="GO" id="GO:0003899">
    <property type="term" value="F:DNA-directed RNA polymerase activity"/>
    <property type="evidence" value="ECO:0007669"/>
    <property type="project" value="UniProtKB-UniRule"/>
</dbReference>
<dbReference type="GO" id="GO:0000287">
    <property type="term" value="F:magnesium ion binding"/>
    <property type="evidence" value="ECO:0007669"/>
    <property type="project" value="UniProtKB-UniRule"/>
</dbReference>
<dbReference type="GO" id="GO:0008270">
    <property type="term" value="F:zinc ion binding"/>
    <property type="evidence" value="ECO:0007669"/>
    <property type="project" value="UniProtKB-UniRule"/>
</dbReference>
<dbReference type="GO" id="GO:0006351">
    <property type="term" value="P:DNA-templated transcription"/>
    <property type="evidence" value="ECO:0007669"/>
    <property type="project" value="UniProtKB-UniRule"/>
</dbReference>
<dbReference type="FunFam" id="4.10.860.120:FF:000007">
    <property type="entry name" value="DNA-directed RNA polymerase subunit gamma"/>
    <property type="match status" value="1"/>
</dbReference>
<dbReference type="Gene3D" id="1.10.40.90">
    <property type="match status" value="1"/>
</dbReference>
<dbReference type="Gene3D" id="2.40.40.20">
    <property type="match status" value="1"/>
</dbReference>
<dbReference type="Gene3D" id="4.10.860.120">
    <property type="entry name" value="RNA polymerase II, clamp domain"/>
    <property type="match status" value="1"/>
</dbReference>
<dbReference type="Gene3D" id="1.10.274.100">
    <property type="entry name" value="RNA polymerase Rpb1, domain 3"/>
    <property type="match status" value="1"/>
</dbReference>
<dbReference type="HAMAP" id="MF_01323">
    <property type="entry name" value="RNApol_bact_RpoC1"/>
    <property type="match status" value="1"/>
</dbReference>
<dbReference type="InterPro" id="IPR045867">
    <property type="entry name" value="DNA-dir_RpoC_beta_prime"/>
</dbReference>
<dbReference type="InterPro" id="IPR000722">
    <property type="entry name" value="RNA_pol_asu"/>
</dbReference>
<dbReference type="InterPro" id="IPR006592">
    <property type="entry name" value="RNA_pol_N"/>
</dbReference>
<dbReference type="InterPro" id="IPR007080">
    <property type="entry name" value="RNA_pol_Rpb1_1"/>
</dbReference>
<dbReference type="InterPro" id="IPR042102">
    <property type="entry name" value="RNA_pol_Rpb1_3_sf"/>
</dbReference>
<dbReference type="InterPro" id="IPR044893">
    <property type="entry name" value="RNA_pol_Rpb1_clamp_domain"/>
</dbReference>
<dbReference type="InterPro" id="IPR034678">
    <property type="entry name" value="RNApol_RpoC1"/>
</dbReference>
<dbReference type="PANTHER" id="PTHR19376">
    <property type="entry name" value="DNA-DIRECTED RNA POLYMERASE"/>
    <property type="match status" value="1"/>
</dbReference>
<dbReference type="PANTHER" id="PTHR19376:SF54">
    <property type="entry name" value="DNA-DIRECTED RNA POLYMERASE SUBUNIT BETA"/>
    <property type="match status" value="1"/>
</dbReference>
<dbReference type="Pfam" id="PF04997">
    <property type="entry name" value="RNA_pol_Rpb1_1"/>
    <property type="match status" value="1"/>
</dbReference>
<dbReference type="Pfam" id="PF00623">
    <property type="entry name" value="RNA_pol_Rpb1_2"/>
    <property type="match status" value="2"/>
</dbReference>
<dbReference type="SMART" id="SM00663">
    <property type="entry name" value="RPOLA_N"/>
    <property type="match status" value="1"/>
</dbReference>
<dbReference type="SUPFAM" id="SSF64484">
    <property type="entry name" value="beta and beta-prime subunits of DNA dependent RNA-polymerase"/>
    <property type="match status" value="1"/>
</dbReference>
<organism>
    <name type="scientific">Lotus japonicus</name>
    <name type="common">Lotus corniculatus var. japonicus</name>
    <dbReference type="NCBI Taxonomy" id="34305"/>
    <lineage>
        <taxon>Eukaryota</taxon>
        <taxon>Viridiplantae</taxon>
        <taxon>Streptophyta</taxon>
        <taxon>Embryophyta</taxon>
        <taxon>Tracheophyta</taxon>
        <taxon>Spermatophyta</taxon>
        <taxon>Magnoliopsida</taxon>
        <taxon>eudicotyledons</taxon>
        <taxon>Gunneridae</taxon>
        <taxon>Pentapetalae</taxon>
        <taxon>rosids</taxon>
        <taxon>fabids</taxon>
        <taxon>Fabales</taxon>
        <taxon>Fabaceae</taxon>
        <taxon>Papilionoideae</taxon>
        <taxon>50 kb inversion clade</taxon>
        <taxon>NPAAA clade</taxon>
        <taxon>Hologalegina</taxon>
        <taxon>robinioid clade</taxon>
        <taxon>Loteae</taxon>
        <taxon>Lotus</taxon>
    </lineage>
</organism>
<accession>Q9BBS8</accession>